<gene>
    <name evidence="1" type="primary">panB</name>
    <name type="ordered locus">SeHA_C0214</name>
</gene>
<organism>
    <name type="scientific">Salmonella heidelberg (strain SL476)</name>
    <dbReference type="NCBI Taxonomy" id="454169"/>
    <lineage>
        <taxon>Bacteria</taxon>
        <taxon>Pseudomonadati</taxon>
        <taxon>Pseudomonadota</taxon>
        <taxon>Gammaproteobacteria</taxon>
        <taxon>Enterobacterales</taxon>
        <taxon>Enterobacteriaceae</taxon>
        <taxon>Salmonella</taxon>
    </lineage>
</organism>
<dbReference type="EC" id="2.1.2.11" evidence="1"/>
<dbReference type="EMBL" id="CP001120">
    <property type="protein sequence ID" value="ACF67119.1"/>
    <property type="molecule type" value="Genomic_DNA"/>
</dbReference>
<dbReference type="RefSeq" id="WP_000805487.1">
    <property type="nucleotide sequence ID" value="NC_011083.1"/>
</dbReference>
<dbReference type="SMR" id="B4TK05"/>
<dbReference type="KEGG" id="seh:SeHA_C0214"/>
<dbReference type="HOGENOM" id="CLU_036645_1_0_6"/>
<dbReference type="UniPathway" id="UPA00028">
    <property type="reaction ID" value="UER00003"/>
</dbReference>
<dbReference type="Proteomes" id="UP000001866">
    <property type="component" value="Chromosome"/>
</dbReference>
<dbReference type="GO" id="GO:0005737">
    <property type="term" value="C:cytoplasm"/>
    <property type="evidence" value="ECO:0007669"/>
    <property type="project" value="UniProtKB-SubCell"/>
</dbReference>
<dbReference type="GO" id="GO:0003864">
    <property type="term" value="F:3-methyl-2-oxobutanoate hydroxymethyltransferase activity"/>
    <property type="evidence" value="ECO:0007669"/>
    <property type="project" value="UniProtKB-UniRule"/>
</dbReference>
<dbReference type="GO" id="GO:0000287">
    <property type="term" value="F:magnesium ion binding"/>
    <property type="evidence" value="ECO:0007669"/>
    <property type="project" value="TreeGrafter"/>
</dbReference>
<dbReference type="GO" id="GO:0015940">
    <property type="term" value="P:pantothenate biosynthetic process"/>
    <property type="evidence" value="ECO:0007669"/>
    <property type="project" value="UniProtKB-UniRule"/>
</dbReference>
<dbReference type="CDD" id="cd06557">
    <property type="entry name" value="KPHMT-like"/>
    <property type="match status" value="1"/>
</dbReference>
<dbReference type="FunFam" id="3.20.20.60:FF:000003">
    <property type="entry name" value="3-methyl-2-oxobutanoate hydroxymethyltransferase"/>
    <property type="match status" value="1"/>
</dbReference>
<dbReference type="Gene3D" id="3.20.20.60">
    <property type="entry name" value="Phosphoenolpyruvate-binding domains"/>
    <property type="match status" value="1"/>
</dbReference>
<dbReference type="HAMAP" id="MF_00156">
    <property type="entry name" value="PanB"/>
    <property type="match status" value="1"/>
</dbReference>
<dbReference type="InterPro" id="IPR003700">
    <property type="entry name" value="Pantoate_hydroxy_MeTrfase"/>
</dbReference>
<dbReference type="InterPro" id="IPR015813">
    <property type="entry name" value="Pyrv/PenolPyrv_kinase-like_dom"/>
</dbReference>
<dbReference type="InterPro" id="IPR040442">
    <property type="entry name" value="Pyrv_kinase-like_dom_sf"/>
</dbReference>
<dbReference type="NCBIfam" id="TIGR00222">
    <property type="entry name" value="panB"/>
    <property type="match status" value="1"/>
</dbReference>
<dbReference type="NCBIfam" id="NF001452">
    <property type="entry name" value="PRK00311.1"/>
    <property type="match status" value="1"/>
</dbReference>
<dbReference type="PANTHER" id="PTHR20881">
    <property type="entry name" value="3-METHYL-2-OXOBUTANOATE HYDROXYMETHYLTRANSFERASE"/>
    <property type="match status" value="1"/>
</dbReference>
<dbReference type="PANTHER" id="PTHR20881:SF0">
    <property type="entry name" value="3-METHYL-2-OXOBUTANOATE HYDROXYMETHYLTRANSFERASE"/>
    <property type="match status" value="1"/>
</dbReference>
<dbReference type="Pfam" id="PF02548">
    <property type="entry name" value="Pantoate_transf"/>
    <property type="match status" value="1"/>
</dbReference>
<dbReference type="PIRSF" id="PIRSF000388">
    <property type="entry name" value="Pantoate_hydroxy_MeTrfase"/>
    <property type="match status" value="1"/>
</dbReference>
<dbReference type="SUPFAM" id="SSF51621">
    <property type="entry name" value="Phosphoenolpyruvate/pyruvate domain"/>
    <property type="match status" value="1"/>
</dbReference>
<comment type="function">
    <text evidence="1">Catalyzes the reversible reaction in which hydroxymethyl group from 5,10-methylenetetrahydrofolate is transferred onto alpha-ketoisovalerate to form ketopantoate.</text>
</comment>
<comment type="catalytic activity">
    <reaction evidence="1">
        <text>3-methyl-2-oxobutanoate + (6R)-5,10-methylene-5,6,7,8-tetrahydrofolate + H2O = 2-dehydropantoate + (6S)-5,6,7,8-tetrahydrofolate</text>
        <dbReference type="Rhea" id="RHEA:11824"/>
        <dbReference type="ChEBI" id="CHEBI:11561"/>
        <dbReference type="ChEBI" id="CHEBI:11851"/>
        <dbReference type="ChEBI" id="CHEBI:15377"/>
        <dbReference type="ChEBI" id="CHEBI:15636"/>
        <dbReference type="ChEBI" id="CHEBI:57453"/>
        <dbReference type="EC" id="2.1.2.11"/>
    </reaction>
</comment>
<comment type="cofactor">
    <cofactor evidence="1">
        <name>Mg(2+)</name>
        <dbReference type="ChEBI" id="CHEBI:18420"/>
    </cofactor>
    <text evidence="1">Binds 1 Mg(2+) ion per subunit.</text>
</comment>
<comment type="pathway">
    <text evidence="1">Cofactor biosynthesis; (R)-pantothenate biosynthesis; (R)-pantoate from 3-methyl-2-oxobutanoate: step 1/2.</text>
</comment>
<comment type="subunit">
    <text evidence="1">Homodecamer; pentamer of dimers.</text>
</comment>
<comment type="subcellular location">
    <subcellularLocation>
        <location evidence="1">Cytoplasm</location>
    </subcellularLocation>
</comment>
<comment type="similarity">
    <text evidence="1">Belongs to the PanB family.</text>
</comment>
<feature type="chain" id="PRO_1000097004" description="3-methyl-2-oxobutanoate hydroxymethyltransferase">
    <location>
        <begin position="1"/>
        <end position="263"/>
    </location>
</feature>
<feature type="active site" description="Proton acceptor" evidence="1">
    <location>
        <position position="180"/>
    </location>
</feature>
<feature type="binding site" evidence="1">
    <location>
        <begin position="45"/>
        <end position="46"/>
    </location>
    <ligand>
        <name>3-methyl-2-oxobutanoate</name>
        <dbReference type="ChEBI" id="CHEBI:11851"/>
    </ligand>
</feature>
<feature type="binding site" evidence="1">
    <location>
        <position position="45"/>
    </location>
    <ligand>
        <name>Mg(2+)</name>
        <dbReference type="ChEBI" id="CHEBI:18420"/>
    </ligand>
</feature>
<feature type="binding site" evidence="1">
    <location>
        <position position="84"/>
    </location>
    <ligand>
        <name>3-methyl-2-oxobutanoate</name>
        <dbReference type="ChEBI" id="CHEBI:11851"/>
    </ligand>
</feature>
<feature type="binding site" evidence="1">
    <location>
        <position position="84"/>
    </location>
    <ligand>
        <name>Mg(2+)</name>
        <dbReference type="ChEBI" id="CHEBI:18420"/>
    </ligand>
</feature>
<feature type="binding site" evidence="1">
    <location>
        <position position="112"/>
    </location>
    <ligand>
        <name>3-methyl-2-oxobutanoate</name>
        <dbReference type="ChEBI" id="CHEBI:11851"/>
    </ligand>
</feature>
<feature type="binding site" evidence="1">
    <location>
        <position position="114"/>
    </location>
    <ligand>
        <name>Mg(2+)</name>
        <dbReference type="ChEBI" id="CHEBI:18420"/>
    </ligand>
</feature>
<reference key="1">
    <citation type="journal article" date="2011" name="J. Bacteriol.">
        <title>Comparative genomics of 28 Salmonella enterica isolates: evidence for CRISPR-mediated adaptive sublineage evolution.</title>
        <authorList>
            <person name="Fricke W.F."/>
            <person name="Mammel M.K."/>
            <person name="McDermott P.F."/>
            <person name="Tartera C."/>
            <person name="White D.G."/>
            <person name="Leclerc J.E."/>
            <person name="Ravel J."/>
            <person name="Cebula T.A."/>
        </authorList>
    </citation>
    <scope>NUCLEOTIDE SEQUENCE [LARGE SCALE GENOMIC DNA]</scope>
    <source>
        <strain>SL476</strain>
    </source>
</reference>
<proteinExistence type="inferred from homology"/>
<keyword id="KW-0963">Cytoplasm</keyword>
<keyword id="KW-0460">Magnesium</keyword>
<keyword id="KW-0479">Metal-binding</keyword>
<keyword id="KW-0566">Pantothenate biosynthesis</keyword>
<keyword id="KW-0808">Transferase</keyword>
<evidence type="ECO:0000255" key="1">
    <source>
        <dbReference type="HAMAP-Rule" id="MF_00156"/>
    </source>
</evidence>
<sequence>MKPTTISLLQKCKQEKKRFATITAYDYSFAKLFADEGINVMLVGDSLGMTIQGHDSTLPVTVEDIAYHTRAVRRGAPNCLLLSDLPFMAYATPEQACENAAIVMRAGANMVKIEGGAWLVDTVKMLTERAVPVCGHLGLTPQSVNIFGGYKIQGRGDAGQVLLDDALALEAAGAQLLVLECVPVELAKRVTEALSIPVIGIGAGNVTDGQILVMHDAFGITGGHIPKFAKNFLAEAGDMRAAVQQYMAEVESGVYPGEEHSFH</sequence>
<protein>
    <recommendedName>
        <fullName evidence="1">3-methyl-2-oxobutanoate hydroxymethyltransferase</fullName>
        <ecNumber evidence="1">2.1.2.11</ecNumber>
    </recommendedName>
    <alternativeName>
        <fullName evidence="1">Ketopantoate hydroxymethyltransferase</fullName>
        <shortName evidence="1">KPHMT</shortName>
    </alternativeName>
</protein>
<name>PANB_SALHS</name>
<accession>B4TK05</accession>